<feature type="signal peptide" evidence="1">
    <location>
        <begin position="1"/>
        <end position="17"/>
    </location>
</feature>
<feature type="chain" id="PRO_0000446840" description="U-scutigerotoxin(02)-Tl1a" evidence="3">
    <location>
        <begin position="18"/>
        <end position="70"/>
    </location>
</feature>
<protein>
    <recommendedName>
        <fullName evidence="2">U-scutigerotoxin(02)-Tl1a</fullName>
        <shortName evidence="2">U-SCUTX(02)-Tl1a</shortName>
    </recommendedName>
</protein>
<organism>
    <name type="scientific">Thereuopoda longicornis</name>
    <name type="common">Long-legged centipede</name>
    <dbReference type="NCBI Taxonomy" id="353555"/>
    <lineage>
        <taxon>Eukaryota</taxon>
        <taxon>Metazoa</taxon>
        <taxon>Ecdysozoa</taxon>
        <taxon>Arthropoda</taxon>
        <taxon>Myriapoda</taxon>
        <taxon>Chilopoda</taxon>
        <taxon>Notostigmophora</taxon>
        <taxon>Scutigeromorpha</taxon>
        <taxon>Scutigeridae</taxon>
        <taxon>Thereuopoda</taxon>
    </lineage>
</organism>
<reference key="1">
    <citation type="journal article" date="2014" name="Mol. Biol. Evol.">
        <title>Clawing through evolution: toxin diversification and convergence in the ancient lineage Chilopoda (centipedes).</title>
        <authorList>
            <person name="Undheim E.A."/>
            <person name="Jones A."/>
            <person name="Clauser K.R."/>
            <person name="Holland J.W."/>
            <person name="Pineda S.S."/>
            <person name="King G.F."/>
            <person name="Fry B.G."/>
        </authorList>
    </citation>
    <scope>NUCLEOTIDE SEQUENCE [MRNA]</scope>
    <scope>NOMENCLATURE</scope>
    <source>
        <tissue>Venom gland</tissue>
    </source>
</reference>
<name>UX21A_THELO</name>
<evidence type="ECO:0000255" key="1"/>
<evidence type="ECO:0000303" key="2">
    <source>
    </source>
</evidence>
<evidence type="ECO:0000305" key="3"/>
<evidence type="ECO:0000305" key="4">
    <source>
    </source>
</evidence>
<sequence>MKYILLGLLLMVVLANANRLADPNCGVCTLRSICFMEKESCPKGFKCCAFKRQDKPGSKITRGCCVKNKN</sequence>
<proteinExistence type="inferred from homology"/>
<comment type="subcellular location">
    <subcellularLocation>
        <location evidence="4">Secreted</location>
    </subcellularLocation>
</comment>
<comment type="tissue specificity">
    <text evidence="4">Expressed by the venom gland.</text>
</comment>
<comment type="PTM">
    <text evidence="3">Contains 4 disulfide bonds.</text>
</comment>
<comment type="similarity">
    <text evidence="3">Belongs to the scutigerotoxin-02 family.</text>
</comment>
<comment type="caution">
    <text evidence="4">All T.longicornis family members described in 'Undeheim et al., 2014' have not been imported into UniProtKB. Please, refer to this paper to access them.</text>
</comment>
<comment type="online information" name="National Center for Biotechnology Information (NCBI)">
    <link uri="https://www.ncbi.nlm.nih.gov/nuccore/GASR01000101"/>
</comment>
<dbReference type="GO" id="GO:0005576">
    <property type="term" value="C:extracellular region"/>
    <property type="evidence" value="ECO:0007669"/>
    <property type="project" value="UniProtKB-SubCell"/>
</dbReference>
<dbReference type="GO" id="GO:0090729">
    <property type="term" value="F:toxin activity"/>
    <property type="evidence" value="ECO:0007669"/>
    <property type="project" value="UniProtKB-KW"/>
</dbReference>
<keyword id="KW-1015">Disulfide bond</keyword>
<keyword id="KW-0964">Secreted</keyword>
<keyword id="KW-0732">Signal</keyword>
<keyword id="KW-0800">Toxin</keyword>
<accession>P0DPV8</accession>